<sequence>MEGFTIWLTGPSGAGKTTLAVKLAKKLREMGYKVEILDGDTIRKTLYPNLGFSKEAREMHNRIVIYMAKLLTRNGVIAIVSLISPYKRIREYARKEIGRFMEVYVYAPLEVRIKRDPKGLYAKAIRGEIRGLTGYDGVYEEPENPEVKVDSSRMTPDEEAELVIRKAKELGYLP</sequence>
<gene>
    <name type="primary">cysC</name>
    <name type="ordered locus">PYRAB11720</name>
    <name type="ORF">PAB0781</name>
</gene>
<dbReference type="EC" id="2.7.1.25"/>
<dbReference type="EMBL" id="AJ248286">
    <property type="protein sequence ID" value="CAB50083.1"/>
    <property type="molecule type" value="Genomic_DNA"/>
</dbReference>
<dbReference type="EMBL" id="HE613800">
    <property type="protein sequence ID" value="CCE70597.1"/>
    <property type="molecule type" value="Genomic_DNA"/>
</dbReference>
<dbReference type="PIR" id="F75097">
    <property type="entry name" value="F75097"/>
</dbReference>
<dbReference type="RefSeq" id="WP_010868289.1">
    <property type="nucleotide sequence ID" value="NC_000868.1"/>
</dbReference>
<dbReference type="SMR" id="P56858"/>
<dbReference type="STRING" id="272844.PAB0781"/>
<dbReference type="KEGG" id="pab:PAB0781"/>
<dbReference type="PATRIC" id="fig|272844.11.peg.1243"/>
<dbReference type="eggNOG" id="arCOG01040">
    <property type="taxonomic scope" value="Archaea"/>
</dbReference>
<dbReference type="HOGENOM" id="CLU_046932_2_3_2"/>
<dbReference type="OrthoDB" id="28808at2157"/>
<dbReference type="PhylomeDB" id="P56858"/>
<dbReference type="UniPathway" id="UPA00140">
    <property type="reaction ID" value="UER00205"/>
</dbReference>
<dbReference type="Proteomes" id="UP000000810">
    <property type="component" value="Chromosome"/>
</dbReference>
<dbReference type="Proteomes" id="UP000009139">
    <property type="component" value="Chromosome"/>
</dbReference>
<dbReference type="GO" id="GO:0005737">
    <property type="term" value="C:cytoplasm"/>
    <property type="evidence" value="ECO:0007669"/>
    <property type="project" value="TreeGrafter"/>
</dbReference>
<dbReference type="GO" id="GO:0004020">
    <property type="term" value="F:adenylylsulfate kinase activity"/>
    <property type="evidence" value="ECO:0007669"/>
    <property type="project" value="UniProtKB-UniRule"/>
</dbReference>
<dbReference type="GO" id="GO:0005524">
    <property type="term" value="F:ATP binding"/>
    <property type="evidence" value="ECO:0007669"/>
    <property type="project" value="UniProtKB-UniRule"/>
</dbReference>
<dbReference type="GO" id="GO:0004781">
    <property type="term" value="F:sulfate adenylyltransferase (ATP) activity"/>
    <property type="evidence" value="ECO:0007669"/>
    <property type="project" value="TreeGrafter"/>
</dbReference>
<dbReference type="GO" id="GO:0070814">
    <property type="term" value="P:hydrogen sulfide biosynthetic process"/>
    <property type="evidence" value="ECO:0007669"/>
    <property type="project" value="UniProtKB-UniRule"/>
</dbReference>
<dbReference type="GO" id="GO:0010134">
    <property type="term" value="P:sulfate assimilation via adenylyl sulfate reduction"/>
    <property type="evidence" value="ECO:0007669"/>
    <property type="project" value="TreeGrafter"/>
</dbReference>
<dbReference type="GO" id="GO:0019379">
    <property type="term" value="P:sulfate assimilation, phosphoadenylyl sulfate reduction by phosphoadenylyl-sulfate reductase (thioredoxin)"/>
    <property type="evidence" value="ECO:0007669"/>
    <property type="project" value="TreeGrafter"/>
</dbReference>
<dbReference type="CDD" id="cd02027">
    <property type="entry name" value="APSK"/>
    <property type="match status" value="1"/>
</dbReference>
<dbReference type="Gene3D" id="3.40.50.300">
    <property type="entry name" value="P-loop containing nucleotide triphosphate hydrolases"/>
    <property type="match status" value="1"/>
</dbReference>
<dbReference type="HAMAP" id="MF_00065">
    <property type="entry name" value="Adenylyl_sulf_kinase"/>
    <property type="match status" value="1"/>
</dbReference>
<dbReference type="InterPro" id="IPR002891">
    <property type="entry name" value="APS_kinase"/>
</dbReference>
<dbReference type="InterPro" id="IPR027417">
    <property type="entry name" value="P-loop_NTPase"/>
</dbReference>
<dbReference type="InterPro" id="IPR050512">
    <property type="entry name" value="Sulf_AdTrans/APS_kinase"/>
</dbReference>
<dbReference type="NCBIfam" id="TIGR00455">
    <property type="entry name" value="apsK"/>
    <property type="match status" value="1"/>
</dbReference>
<dbReference type="PANTHER" id="PTHR42700">
    <property type="entry name" value="SULFATE ADENYLYLTRANSFERASE"/>
    <property type="match status" value="1"/>
</dbReference>
<dbReference type="PANTHER" id="PTHR42700:SF1">
    <property type="entry name" value="SULFATE ADENYLYLTRANSFERASE"/>
    <property type="match status" value="1"/>
</dbReference>
<dbReference type="Pfam" id="PF01583">
    <property type="entry name" value="APS_kinase"/>
    <property type="match status" value="1"/>
</dbReference>
<dbReference type="SUPFAM" id="SSF52540">
    <property type="entry name" value="P-loop containing nucleoside triphosphate hydrolases"/>
    <property type="match status" value="1"/>
</dbReference>
<proteinExistence type="inferred from homology"/>
<accession>P56858</accession>
<accession>G8ZKF4</accession>
<reference key="1">
    <citation type="journal article" date="2003" name="Mol. Microbiol.">
        <title>An integrated analysis of the genome of the hyperthermophilic archaeon Pyrococcus abyssi.</title>
        <authorList>
            <person name="Cohen G.N."/>
            <person name="Barbe V."/>
            <person name="Flament D."/>
            <person name="Galperin M."/>
            <person name="Heilig R."/>
            <person name="Lecompte O."/>
            <person name="Poch O."/>
            <person name="Prieur D."/>
            <person name="Querellou J."/>
            <person name="Ripp R."/>
            <person name="Thierry J.-C."/>
            <person name="Van der Oost J."/>
            <person name="Weissenbach J."/>
            <person name="Zivanovic Y."/>
            <person name="Forterre P."/>
        </authorList>
    </citation>
    <scope>NUCLEOTIDE SEQUENCE [LARGE SCALE GENOMIC DNA]</scope>
    <source>
        <strain>GE5 / Orsay</strain>
    </source>
</reference>
<reference key="2">
    <citation type="journal article" date="2012" name="Curr. Microbiol.">
        <title>Re-annotation of two hyperthermophilic archaea Pyrococcus abyssi GE5 and Pyrococcus furiosus DSM 3638.</title>
        <authorList>
            <person name="Gao J."/>
            <person name="Wang J."/>
        </authorList>
    </citation>
    <scope>GENOME REANNOTATION</scope>
    <source>
        <strain>GE5 / Orsay</strain>
    </source>
</reference>
<feature type="chain" id="PRO_0000105930" description="Probable adenylyl-sulfate kinase">
    <location>
        <begin position="1"/>
        <end position="174"/>
    </location>
</feature>
<feature type="active site" description="Phosphoserine intermediate" evidence="1">
    <location>
        <position position="84"/>
    </location>
</feature>
<feature type="binding site" evidence="1">
    <location>
        <begin position="10"/>
        <end position="17"/>
    </location>
    <ligand>
        <name>ATP</name>
        <dbReference type="ChEBI" id="CHEBI:30616"/>
    </ligand>
</feature>
<name>CYSC_PYRAB</name>
<comment type="function">
    <text>Catalyzes the synthesis of activated sulfate.</text>
</comment>
<comment type="catalytic activity">
    <reaction>
        <text>adenosine 5'-phosphosulfate + ATP = 3'-phosphoadenylyl sulfate + ADP + H(+)</text>
        <dbReference type="Rhea" id="RHEA:24152"/>
        <dbReference type="ChEBI" id="CHEBI:15378"/>
        <dbReference type="ChEBI" id="CHEBI:30616"/>
        <dbReference type="ChEBI" id="CHEBI:58243"/>
        <dbReference type="ChEBI" id="CHEBI:58339"/>
        <dbReference type="ChEBI" id="CHEBI:456216"/>
        <dbReference type="EC" id="2.7.1.25"/>
    </reaction>
</comment>
<comment type="pathway">
    <text>Sulfur metabolism; hydrogen sulfide biosynthesis; sulfite from sulfate: step 2/3.</text>
</comment>
<comment type="similarity">
    <text evidence="2">Belongs to the APS kinase family.</text>
</comment>
<keyword id="KW-0067">ATP-binding</keyword>
<keyword id="KW-0418">Kinase</keyword>
<keyword id="KW-0547">Nucleotide-binding</keyword>
<keyword id="KW-0597">Phosphoprotein</keyword>
<keyword id="KW-0808">Transferase</keyword>
<evidence type="ECO:0000250" key="1"/>
<evidence type="ECO:0000305" key="2"/>
<organism>
    <name type="scientific">Pyrococcus abyssi (strain GE5 / Orsay)</name>
    <dbReference type="NCBI Taxonomy" id="272844"/>
    <lineage>
        <taxon>Archaea</taxon>
        <taxon>Methanobacteriati</taxon>
        <taxon>Methanobacteriota</taxon>
        <taxon>Thermococci</taxon>
        <taxon>Thermococcales</taxon>
        <taxon>Thermococcaceae</taxon>
        <taxon>Pyrococcus</taxon>
    </lineage>
</organism>
<protein>
    <recommendedName>
        <fullName>Probable adenylyl-sulfate kinase</fullName>
        <ecNumber>2.7.1.25</ecNumber>
    </recommendedName>
    <alternativeName>
        <fullName>APS kinase</fullName>
    </alternativeName>
    <alternativeName>
        <fullName>ATP adenosine-5'-phosphosulfate 3'-phosphotransferase</fullName>
    </alternativeName>
    <alternativeName>
        <fullName>Adenosine-5'-phosphosulfate kinase</fullName>
    </alternativeName>
</protein>